<feature type="chain" id="PRO_0000089688" description="P2R1A-PPP2R2A-interacting phosphatase regulator 1">
    <location>
        <begin position="1"/>
        <end position="284"/>
    </location>
</feature>
<feature type="region of interest" description="Disordered" evidence="2">
    <location>
        <begin position="1"/>
        <end position="32"/>
    </location>
</feature>
<feature type="region of interest" description="Disordered" evidence="2">
    <location>
        <begin position="112"/>
        <end position="198"/>
    </location>
</feature>
<feature type="region of interest" description="Disordered" evidence="2">
    <location>
        <begin position="235"/>
        <end position="284"/>
    </location>
</feature>
<feature type="compositionally biased region" description="Low complexity" evidence="2">
    <location>
        <begin position="152"/>
        <end position="164"/>
    </location>
</feature>
<feature type="compositionally biased region" description="Low complexity" evidence="2">
    <location>
        <begin position="172"/>
        <end position="184"/>
    </location>
</feature>
<feature type="compositionally biased region" description="Polar residues" evidence="2">
    <location>
        <begin position="258"/>
        <end position="269"/>
    </location>
</feature>
<dbReference type="EMBL" id="AJ719697">
    <property type="protein sequence ID" value="CAG31356.1"/>
    <property type="molecule type" value="mRNA"/>
</dbReference>
<dbReference type="RefSeq" id="NP_001026289.1">
    <property type="nucleotide sequence ID" value="NM_001031118.1"/>
</dbReference>
<dbReference type="SMR" id="Q5ZLN7"/>
<dbReference type="FunCoup" id="Q5ZLN7">
    <property type="interactions" value="275"/>
</dbReference>
<dbReference type="STRING" id="9031.ENSGALP00000009875"/>
<dbReference type="GlyGen" id="Q5ZLN7">
    <property type="glycosylation" value="1 site"/>
</dbReference>
<dbReference type="PaxDb" id="9031-ENSGALP00000009875"/>
<dbReference type="Ensembl" id="ENSGALT00010037987.1">
    <property type="protein sequence ID" value="ENSGALP00010021915.1"/>
    <property type="gene ID" value="ENSGALG00010015778.1"/>
</dbReference>
<dbReference type="GeneID" id="422237"/>
<dbReference type="KEGG" id="gga:422237"/>
<dbReference type="CTD" id="422237"/>
<dbReference type="VEuPathDB" id="HostDB:geneid_422237"/>
<dbReference type="eggNOG" id="ENOG502QTCH">
    <property type="taxonomic scope" value="Eukaryota"/>
</dbReference>
<dbReference type="GeneTree" id="ENSGT00390000015476"/>
<dbReference type="HOGENOM" id="CLU_083344_0_0_1"/>
<dbReference type="InParanoid" id="Q5ZLN7"/>
<dbReference type="OMA" id="ISHHTDS"/>
<dbReference type="OrthoDB" id="10036177at2759"/>
<dbReference type="PhylomeDB" id="Q5ZLN7"/>
<dbReference type="PRO" id="PR:Q5ZLN7"/>
<dbReference type="Proteomes" id="UP000000539">
    <property type="component" value="Chromosome 4"/>
</dbReference>
<dbReference type="Bgee" id="ENSGALG00000006127">
    <property type="expression patterns" value="Expressed in spleen and 14 other cell types or tissues"/>
</dbReference>
<dbReference type="GO" id="GO:0005737">
    <property type="term" value="C:cytoplasm"/>
    <property type="evidence" value="ECO:0000250"/>
    <property type="project" value="UniProtKB"/>
</dbReference>
<dbReference type="GO" id="GO:0005634">
    <property type="term" value="C:nucleus"/>
    <property type="evidence" value="ECO:0000250"/>
    <property type="project" value="UniProtKB"/>
</dbReference>
<dbReference type="GO" id="GO:0004865">
    <property type="term" value="F:protein serine/threonine phosphatase inhibitor activity"/>
    <property type="evidence" value="ECO:0000250"/>
    <property type="project" value="UniProtKB"/>
</dbReference>
<dbReference type="GO" id="GO:0044818">
    <property type="term" value="P:mitotic G2/M transition checkpoint"/>
    <property type="evidence" value="ECO:0000250"/>
    <property type="project" value="UniProtKB"/>
</dbReference>
<dbReference type="GO" id="GO:0030307">
    <property type="term" value="P:positive regulation of cell growth"/>
    <property type="evidence" value="ECO:0000250"/>
    <property type="project" value="UniProtKB"/>
</dbReference>
<dbReference type="GO" id="GO:0032436">
    <property type="term" value="P:positive regulation of proteasomal ubiquitin-dependent protein catabolic process"/>
    <property type="evidence" value="ECO:0000250"/>
    <property type="project" value="UniProtKB"/>
</dbReference>
<dbReference type="InterPro" id="IPR026716">
    <property type="entry name" value="PBIR1/2/3"/>
</dbReference>
<dbReference type="PANTHER" id="PTHR22227">
    <property type="entry name" value="FAMILY WITH SEQUENCE SIMILARITY 122B ISOFORM X1"/>
    <property type="match status" value="1"/>
</dbReference>
<dbReference type="PANTHER" id="PTHR22227:SF3">
    <property type="entry name" value="PABIR FAMILY MEMBER 1"/>
    <property type="match status" value="1"/>
</dbReference>
<name>PBIR1_CHICK</name>
<comment type="function">
    <text evidence="1">Acts as an inhibitor of serine/threonine-protein phosphatase 2A (PP2A) activity. Potentiates ubiquitin-mediated proteasomal degradation of serine/threonine-protein phosphatase 2A catalytic subunit alpha (PPP2CA). Inhibits PP2A-mediated dephosphorylation of WEE1, promoting ubiquitin-mediated proteolysis of WEE1, thereby releasing G2/M checkpoint.</text>
</comment>
<comment type="subcellular location">
    <subcellularLocation>
        <location evidence="1">Nucleus</location>
    </subcellularLocation>
    <subcellularLocation>
        <location evidence="1">Cytoplasm</location>
    </subcellularLocation>
</comment>
<comment type="similarity">
    <text evidence="3">Belongs to the FAM122 family.</text>
</comment>
<evidence type="ECO:0000250" key="1">
    <source>
        <dbReference type="UniProtKB" id="Q96E09"/>
    </source>
</evidence>
<evidence type="ECO:0000256" key="2">
    <source>
        <dbReference type="SAM" id="MobiDB-lite"/>
    </source>
</evidence>
<evidence type="ECO:0000305" key="3"/>
<accession>Q5ZLN7</accession>
<sequence>MAQEKMELDLELPPGSAAAPSDGGGLRRSNSAPLIHGLSDNSQVFQGSVLRTRRNSTTVMNRHSLFVPSSPIRIPSSRLHQIKQEEGMNLMNRETVHEREVQVAMQMSQSWEESLSLSNNDFEKSSSPKQVDFVPVSPAPSPTRGIGKQCFSPSLQSLVSSSGLPPSPSPSPTRRFSSRRSQSPINCIRPSVLGPIKRKGVTEMEDHPKRLFQGSTNMLSSEALHQPDLGGCLSAHTLDDNRSSAGSSCDSPAEAGASTGSPVSLSDSRSPFLPVDLTAKLPID</sequence>
<organism>
    <name type="scientific">Gallus gallus</name>
    <name type="common">Chicken</name>
    <dbReference type="NCBI Taxonomy" id="9031"/>
    <lineage>
        <taxon>Eukaryota</taxon>
        <taxon>Metazoa</taxon>
        <taxon>Chordata</taxon>
        <taxon>Craniata</taxon>
        <taxon>Vertebrata</taxon>
        <taxon>Euteleostomi</taxon>
        <taxon>Archelosauria</taxon>
        <taxon>Archosauria</taxon>
        <taxon>Dinosauria</taxon>
        <taxon>Saurischia</taxon>
        <taxon>Theropoda</taxon>
        <taxon>Coelurosauria</taxon>
        <taxon>Aves</taxon>
        <taxon>Neognathae</taxon>
        <taxon>Galloanserae</taxon>
        <taxon>Galliformes</taxon>
        <taxon>Phasianidae</taxon>
        <taxon>Phasianinae</taxon>
        <taxon>Gallus</taxon>
    </lineage>
</organism>
<protein>
    <recommendedName>
        <fullName evidence="1">P2R1A-PPP2R2A-interacting phosphatase regulator 1</fullName>
    </recommendedName>
    <alternativeName>
        <fullName evidence="1">PABIR family member 1</fullName>
    </alternativeName>
</protein>
<keyword id="KW-0963">Cytoplasm</keyword>
<keyword id="KW-0539">Nucleus</keyword>
<keyword id="KW-0650">Protein phosphatase inhibitor</keyword>
<keyword id="KW-1185">Reference proteome</keyword>
<reference key="1">
    <citation type="journal article" date="2005" name="Genome Biol.">
        <title>Full-length cDNAs from chicken bursal lymphocytes to facilitate gene function analysis.</title>
        <authorList>
            <person name="Caldwell R.B."/>
            <person name="Kierzek A.M."/>
            <person name="Arakawa H."/>
            <person name="Bezzubov Y."/>
            <person name="Zaim J."/>
            <person name="Fiedler P."/>
            <person name="Kutter S."/>
            <person name="Blagodatski A."/>
            <person name="Kostovska D."/>
            <person name="Koter M."/>
            <person name="Plachy J."/>
            <person name="Carninci P."/>
            <person name="Hayashizaki Y."/>
            <person name="Buerstedde J.-M."/>
        </authorList>
    </citation>
    <scope>NUCLEOTIDE SEQUENCE [LARGE SCALE MRNA]</scope>
    <source>
        <strain>CB</strain>
        <tissue>Bursa of Fabricius</tissue>
    </source>
</reference>
<proteinExistence type="evidence at transcript level"/>
<gene>
    <name evidence="1" type="primary">PABIR1</name>
    <name evidence="1" type="synonym">FAM122A</name>
    <name type="ORF">RCJMB04_5g5</name>
</gene>